<reference key="1">
    <citation type="journal article" date="2009" name="PLoS Genet.">
        <title>Organised genome dynamics in the Escherichia coli species results in highly diverse adaptive paths.</title>
        <authorList>
            <person name="Touchon M."/>
            <person name="Hoede C."/>
            <person name="Tenaillon O."/>
            <person name="Barbe V."/>
            <person name="Baeriswyl S."/>
            <person name="Bidet P."/>
            <person name="Bingen E."/>
            <person name="Bonacorsi S."/>
            <person name="Bouchier C."/>
            <person name="Bouvet O."/>
            <person name="Calteau A."/>
            <person name="Chiapello H."/>
            <person name="Clermont O."/>
            <person name="Cruveiller S."/>
            <person name="Danchin A."/>
            <person name="Diard M."/>
            <person name="Dossat C."/>
            <person name="Karoui M.E."/>
            <person name="Frapy E."/>
            <person name="Garry L."/>
            <person name="Ghigo J.M."/>
            <person name="Gilles A.M."/>
            <person name="Johnson J."/>
            <person name="Le Bouguenec C."/>
            <person name="Lescat M."/>
            <person name="Mangenot S."/>
            <person name="Martinez-Jehanne V."/>
            <person name="Matic I."/>
            <person name="Nassif X."/>
            <person name="Oztas S."/>
            <person name="Petit M.A."/>
            <person name="Pichon C."/>
            <person name="Rouy Z."/>
            <person name="Ruf C.S."/>
            <person name="Schneider D."/>
            <person name="Tourret J."/>
            <person name="Vacherie B."/>
            <person name="Vallenet D."/>
            <person name="Medigue C."/>
            <person name="Rocha E.P.C."/>
            <person name="Denamur E."/>
        </authorList>
    </citation>
    <scope>NUCLEOTIDE SEQUENCE [LARGE SCALE GENOMIC DNA]</scope>
    <source>
        <strain>IAI39 / ExPEC</strain>
    </source>
</reference>
<evidence type="ECO:0000255" key="1">
    <source>
        <dbReference type="HAMAP-Rule" id="MF_00536"/>
    </source>
</evidence>
<accession>B7NHF8</accession>
<protein>
    <recommendedName>
        <fullName evidence="1">4-hydroxythreonine-4-phosphate dehydrogenase</fullName>
        <ecNumber evidence="1">1.1.1.262</ecNumber>
    </recommendedName>
    <alternativeName>
        <fullName evidence="1">4-(phosphohydroxy)-L-threonine dehydrogenase</fullName>
    </alternativeName>
</protein>
<feature type="chain" id="PRO_1000128242" description="4-hydroxythreonine-4-phosphate dehydrogenase">
    <location>
        <begin position="1"/>
        <end position="329"/>
    </location>
</feature>
<feature type="binding site" evidence="1">
    <location>
        <position position="136"/>
    </location>
    <ligand>
        <name>substrate</name>
    </ligand>
</feature>
<feature type="binding site" evidence="1">
    <location>
        <position position="137"/>
    </location>
    <ligand>
        <name>substrate</name>
    </ligand>
</feature>
<feature type="binding site" evidence="1">
    <location>
        <position position="166"/>
    </location>
    <ligand>
        <name>a divalent metal cation</name>
        <dbReference type="ChEBI" id="CHEBI:60240"/>
        <note>ligand shared between dimeric partners</note>
    </ligand>
</feature>
<feature type="binding site" evidence="1">
    <location>
        <position position="211"/>
    </location>
    <ligand>
        <name>a divalent metal cation</name>
        <dbReference type="ChEBI" id="CHEBI:60240"/>
        <note>ligand shared between dimeric partners</note>
    </ligand>
</feature>
<feature type="binding site" evidence="1">
    <location>
        <position position="266"/>
    </location>
    <ligand>
        <name>a divalent metal cation</name>
        <dbReference type="ChEBI" id="CHEBI:60240"/>
        <note>ligand shared between dimeric partners</note>
    </ligand>
</feature>
<feature type="binding site" evidence="1">
    <location>
        <position position="274"/>
    </location>
    <ligand>
        <name>substrate</name>
    </ligand>
</feature>
<feature type="binding site" evidence="1">
    <location>
        <position position="283"/>
    </location>
    <ligand>
        <name>substrate</name>
    </ligand>
</feature>
<feature type="binding site" evidence="1">
    <location>
        <position position="292"/>
    </location>
    <ligand>
        <name>substrate</name>
    </ligand>
</feature>
<proteinExistence type="inferred from homology"/>
<comment type="function">
    <text evidence="1">Catalyzes the NAD(P)-dependent oxidation of 4-(phosphooxy)-L-threonine (HTP) into 2-amino-3-oxo-4-(phosphooxy)butyric acid which spontaneously decarboxylates to form 3-amino-2-oxopropyl phosphate (AHAP).</text>
</comment>
<comment type="catalytic activity">
    <reaction evidence="1">
        <text>4-(phosphooxy)-L-threonine + NAD(+) = 3-amino-2-oxopropyl phosphate + CO2 + NADH</text>
        <dbReference type="Rhea" id="RHEA:32275"/>
        <dbReference type="ChEBI" id="CHEBI:16526"/>
        <dbReference type="ChEBI" id="CHEBI:57279"/>
        <dbReference type="ChEBI" id="CHEBI:57540"/>
        <dbReference type="ChEBI" id="CHEBI:57945"/>
        <dbReference type="ChEBI" id="CHEBI:58452"/>
        <dbReference type="EC" id="1.1.1.262"/>
    </reaction>
</comment>
<comment type="cofactor">
    <cofactor evidence="1">
        <name>Zn(2+)</name>
        <dbReference type="ChEBI" id="CHEBI:29105"/>
    </cofactor>
    <cofactor evidence="1">
        <name>Mg(2+)</name>
        <dbReference type="ChEBI" id="CHEBI:18420"/>
    </cofactor>
    <cofactor evidence="1">
        <name>Co(2+)</name>
        <dbReference type="ChEBI" id="CHEBI:48828"/>
    </cofactor>
    <text evidence="1">Binds 1 divalent metal cation per subunit. Can use ions such as Zn(2+), Mg(2+) or Co(2+).</text>
</comment>
<comment type="pathway">
    <text evidence="1">Cofactor biosynthesis; pyridoxine 5'-phosphate biosynthesis; pyridoxine 5'-phosphate from D-erythrose 4-phosphate: step 4/5.</text>
</comment>
<comment type="subunit">
    <text evidence="1">Homodimer.</text>
</comment>
<comment type="subcellular location">
    <subcellularLocation>
        <location evidence="1">Cytoplasm</location>
    </subcellularLocation>
</comment>
<comment type="miscellaneous">
    <text evidence="1">The active site is located at the dimer interface.</text>
</comment>
<comment type="similarity">
    <text evidence="1">Belongs to the PdxA family.</text>
</comment>
<organism>
    <name type="scientific">Escherichia coli O7:K1 (strain IAI39 / ExPEC)</name>
    <dbReference type="NCBI Taxonomy" id="585057"/>
    <lineage>
        <taxon>Bacteria</taxon>
        <taxon>Pseudomonadati</taxon>
        <taxon>Pseudomonadota</taxon>
        <taxon>Gammaproteobacteria</taxon>
        <taxon>Enterobacterales</taxon>
        <taxon>Enterobacteriaceae</taxon>
        <taxon>Escherichia</taxon>
    </lineage>
</organism>
<name>PDXA_ECO7I</name>
<sequence length="329" mass="35178">MVKTQRVVITPGEPAGIGPDLIVQLAQREWPVELVVCADATLLTDRAAMLGLPLTLRPYSPNSPAQPQTAGTLTLLPVALRESVTAGQLAVENGHYVVETLARACDGCLNGEFAALITGPVHKGVINDAGIPFTGHTEFFEERSQAKKVVMMLATEELRVALATTHLPLRDIADAITPALLHEVIAILHHDLRTKFGIAEPRILVCGLNPHAGEGGHMGTEEIDTIIPVLDELRAQGMKLNGPLPADTLFQPKYLDNADAVLAMYHDQGLPVLKYQGFGRGVNITLGLPFIRTSVDHGTALELAGRGKADVGSFITALNLAIKMIVNTQ</sequence>
<gene>
    <name evidence="1" type="primary">pdxA</name>
    <name type="ordered locus">ECIAI39_0055</name>
</gene>
<keyword id="KW-0170">Cobalt</keyword>
<keyword id="KW-0963">Cytoplasm</keyword>
<keyword id="KW-0460">Magnesium</keyword>
<keyword id="KW-0479">Metal-binding</keyword>
<keyword id="KW-0520">NAD</keyword>
<keyword id="KW-0521">NADP</keyword>
<keyword id="KW-0560">Oxidoreductase</keyword>
<keyword id="KW-0664">Pyridoxine biosynthesis</keyword>
<keyword id="KW-0862">Zinc</keyword>
<dbReference type="EC" id="1.1.1.262" evidence="1"/>
<dbReference type="EMBL" id="CU928164">
    <property type="protein sequence ID" value="CAR16196.1"/>
    <property type="molecule type" value="Genomic_DNA"/>
</dbReference>
<dbReference type="RefSeq" id="WP_000241224.1">
    <property type="nucleotide sequence ID" value="NC_011750.1"/>
</dbReference>
<dbReference type="RefSeq" id="YP_002406103.1">
    <property type="nucleotide sequence ID" value="NC_011750.1"/>
</dbReference>
<dbReference type="SMR" id="B7NHF8"/>
<dbReference type="STRING" id="585057.ECIAI39_0055"/>
<dbReference type="KEGG" id="ect:ECIAI39_0055"/>
<dbReference type="PATRIC" id="fig|585057.6.peg.59"/>
<dbReference type="HOGENOM" id="CLU_040168_1_0_6"/>
<dbReference type="UniPathway" id="UPA00244">
    <property type="reaction ID" value="UER00312"/>
</dbReference>
<dbReference type="Proteomes" id="UP000000749">
    <property type="component" value="Chromosome"/>
</dbReference>
<dbReference type="GO" id="GO:0005737">
    <property type="term" value="C:cytoplasm"/>
    <property type="evidence" value="ECO:0007669"/>
    <property type="project" value="UniProtKB-SubCell"/>
</dbReference>
<dbReference type="GO" id="GO:0050570">
    <property type="term" value="F:4-hydroxythreonine-4-phosphate dehydrogenase activity"/>
    <property type="evidence" value="ECO:0007669"/>
    <property type="project" value="UniProtKB-UniRule"/>
</dbReference>
<dbReference type="GO" id="GO:0050897">
    <property type="term" value="F:cobalt ion binding"/>
    <property type="evidence" value="ECO:0007669"/>
    <property type="project" value="UniProtKB-UniRule"/>
</dbReference>
<dbReference type="GO" id="GO:0000287">
    <property type="term" value="F:magnesium ion binding"/>
    <property type="evidence" value="ECO:0007669"/>
    <property type="project" value="UniProtKB-UniRule"/>
</dbReference>
<dbReference type="GO" id="GO:0051287">
    <property type="term" value="F:NAD binding"/>
    <property type="evidence" value="ECO:0007669"/>
    <property type="project" value="InterPro"/>
</dbReference>
<dbReference type="GO" id="GO:0008270">
    <property type="term" value="F:zinc ion binding"/>
    <property type="evidence" value="ECO:0007669"/>
    <property type="project" value="UniProtKB-UniRule"/>
</dbReference>
<dbReference type="GO" id="GO:0042823">
    <property type="term" value="P:pyridoxal phosphate biosynthetic process"/>
    <property type="evidence" value="ECO:0007669"/>
    <property type="project" value="UniProtKB-UniRule"/>
</dbReference>
<dbReference type="GO" id="GO:0008615">
    <property type="term" value="P:pyridoxine biosynthetic process"/>
    <property type="evidence" value="ECO:0007669"/>
    <property type="project" value="UniProtKB-UniRule"/>
</dbReference>
<dbReference type="FunFam" id="3.40.718.10:FF:000010">
    <property type="entry name" value="4-hydroxythreonine-4-phosphate dehydrogenase"/>
    <property type="match status" value="1"/>
</dbReference>
<dbReference type="Gene3D" id="3.40.718.10">
    <property type="entry name" value="Isopropylmalate Dehydrogenase"/>
    <property type="match status" value="1"/>
</dbReference>
<dbReference type="HAMAP" id="MF_00536">
    <property type="entry name" value="PdxA"/>
    <property type="match status" value="1"/>
</dbReference>
<dbReference type="InterPro" id="IPR037510">
    <property type="entry name" value="PdxA"/>
</dbReference>
<dbReference type="InterPro" id="IPR005255">
    <property type="entry name" value="PdxA_fam"/>
</dbReference>
<dbReference type="NCBIfam" id="TIGR00557">
    <property type="entry name" value="pdxA"/>
    <property type="match status" value="1"/>
</dbReference>
<dbReference type="PANTHER" id="PTHR30004">
    <property type="entry name" value="4-HYDROXYTHREONINE-4-PHOSPHATE DEHYDROGENASE"/>
    <property type="match status" value="1"/>
</dbReference>
<dbReference type="PANTHER" id="PTHR30004:SF5">
    <property type="entry name" value="4-HYDROXYTHREONINE-4-PHOSPHATE DEHYDROGENASE"/>
    <property type="match status" value="1"/>
</dbReference>
<dbReference type="Pfam" id="PF04166">
    <property type="entry name" value="PdxA"/>
    <property type="match status" value="1"/>
</dbReference>
<dbReference type="SUPFAM" id="SSF53659">
    <property type="entry name" value="Isocitrate/Isopropylmalate dehydrogenase-like"/>
    <property type="match status" value="1"/>
</dbReference>